<reference key="1">
    <citation type="journal article" date="2005" name="Science">
        <title>The transcriptional landscape of the mammalian genome.</title>
        <authorList>
            <person name="Carninci P."/>
            <person name="Kasukawa T."/>
            <person name="Katayama S."/>
            <person name="Gough J."/>
            <person name="Frith M.C."/>
            <person name="Maeda N."/>
            <person name="Oyama R."/>
            <person name="Ravasi T."/>
            <person name="Lenhard B."/>
            <person name="Wells C."/>
            <person name="Kodzius R."/>
            <person name="Shimokawa K."/>
            <person name="Bajic V.B."/>
            <person name="Brenner S.E."/>
            <person name="Batalov S."/>
            <person name="Forrest A.R."/>
            <person name="Zavolan M."/>
            <person name="Davis M.J."/>
            <person name="Wilming L.G."/>
            <person name="Aidinis V."/>
            <person name="Allen J.E."/>
            <person name="Ambesi-Impiombato A."/>
            <person name="Apweiler R."/>
            <person name="Aturaliya R.N."/>
            <person name="Bailey T.L."/>
            <person name="Bansal M."/>
            <person name="Baxter L."/>
            <person name="Beisel K.W."/>
            <person name="Bersano T."/>
            <person name="Bono H."/>
            <person name="Chalk A.M."/>
            <person name="Chiu K.P."/>
            <person name="Choudhary V."/>
            <person name="Christoffels A."/>
            <person name="Clutterbuck D.R."/>
            <person name="Crowe M.L."/>
            <person name="Dalla E."/>
            <person name="Dalrymple B.P."/>
            <person name="de Bono B."/>
            <person name="Della Gatta G."/>
            <person name="di Bernardo D."/>
            <person name="Down T."/>
            <person name="Engstrom P."/>
            <person name="Fagiolini M."/>
            <person name="Faulkner G."/>
            <person name="Fletcher C.F."/>
            <person name="Fukushima T."/>
            <person name="Furuno M."/>
            <person name="Futaki S."/>
            <person name="Gariboldi M."/>
            <person name="Georgii-Hemming P."/>
            <person name="Gingeras T.R."/>
            <person name="Gojobori T."/>
            <person name="Green R.E."/>
            <person name="Gustincich S."/>
            <person name="Harbers M."/>
            <person name="Hayashi Y."/>
            <person name="Hensch T.K."/>
            <person name="Hirokawa N."/>
            <person name="Hill D."/>
            <person name="Huminiecki L."/>
            <person name="Iacono M."/>
            <person name="Ikeo K."/>
            <person name="Iwama A."/>
            <person name="Ishikawa T."/>
            <person name="Jakt M."/>
            <person name="Kanapin A."/>
            <person name="Katoh M."/>
            <person name="Kawasawa Y."/>
            <person name="Kelso J."/>
            <person name="Kitamura H."/>
            <person name="Kitano H."/>
            <person name="Kollias G."/>
            <person name="Krishnan S.P."/>
            <person name="Kruger A."/>
            <person name="Kummerfeld S.K."/>
            <person name="Kurochkin I.V."/>
            <person name="Lareau L.F."/>
            <person name="Lazarevic D."/>
            <person name="Lipovich L."/>
            <person name="Liu J."/>
            <person name="Liuni S."/>
            <person name="McWilliam S."/>
            <person name="Madan Babu M."/>
            <person name="Madera M."/>
            <person name="Marchionni L."/>
            <person name="Matsuda H."/>
            <person name="Matsuzawa S."/>
            <person name="Miki H."/>
            <person name="Mignone F."/>
            <person name="Miyake S."/>
            <person name="Morris K."/>
            <person name="Mottagui-Tabar S."/>
            <person name="Mulder N."/>
            <person name="Nakano N."/>
            <person name="Nakauchi H."/>
            <person name="Ng P."/>
            <person name="Nilsson R."/>
            <person name="Nishiguchi S."/>
            <person name="Nishikawa S."/>
            <person name="Nori F."/>
            <person name="Ohara O."/>
            <person name="Okazaki Y."/>
            <person name="Orlando V."/>
            <person name="Pang K.C."/>
            <person name="Pavan W.J."/>
            <person name="Pavesi G."/>
            <person name="Pesole G."/>
            <person name="Petrovsky N."/>
            <person name="Piazza S."/>
            <person name="Reed J."/>
            <person name="Reid J.F."/>
            <person name="Ring B.Z."/>
            <person name="Ringwald M."/>
            <person name="Rost B."/>
            <person name="Ruan Y."/>
            <person name="Salzberg S.L."/>
            <person name="Sandelin A."/>
            <person name="Schneider C."/>
            <person name="Schoenbach C."/>
            <person name="Sekiguchi K."/>
            <person name="Semple C.A."/>
            <person name="Seno S."/>
            <person name="Sessa L."/>
            <person name="Sheng Y."/>
            <person name="Shibata Y."/>
            <person name="Shimada H."/>
            <person name="Shimada K."/>
            <person name="Silva D."/>
            <person name="Sinclair B."/>
            <person name="Sperling S."/>
            <person name="Stupka E."/>
            <person name="Sugiura K."/>
            <person name="Sultana R."/>
            <person name="Takenaka Y."/>
            <person name="Taki K."/>
            <person name="Tammoja K."/>
            <person name="Tan S.L."/>
            <person name="Tang S."/>
            <person name="Taylor M.S."/>
            <person name="Tegner J."/>
            <person name="Teichmann S.A."/>
            <person name="Ueda H.R."/>
            <person name="van Nimwegen E."/>
            <person name="Verardo R."/>
            <person name="Wei C.L."/>
            <person name="Yagi K."/>
            <person name="Yamanishi H."/>
            <person name="Zabarovsky E."/>
            <person name="Zhu S."/>
            <person name="Zimmer A."/>
            <person name="Hide W."/>
            <person name="Bult C."/>
            <person name="Grimmond S.M."/>
            <person name="Teasdale R.D."/>
            <person name="Liu E.T."/>
            <person name="Brusic V."/>
            <person name="Quackenbush J."/>
            <person name="Wahlestedt C."/>
            <person name="Mattick J.S."/>
            <person name="Hume D.A."/>
            <person name="Kai C."/>
            <person name="Sasaki D."/>
            <person name="Tomaru Y."/>
            <person name="Fukuda S."/>
            <person name="Kanamori-Katayama M."/>
            <person name="Suzuki M."/>
            <person name="Aoki J."/>
            <person name="Arakawa T."/>
            <person name="Iida J."/>
            <person name="Imamura K."/>
            <person name="Itoh M."/>
            <person name="Kato T."/>
            <person name="Kawaji H."/>
            <person name="Kawagashira N."/>
            <person name="Kawashima T."/>
            <person name="Kojima M."/>
            <person name="Kondo S."/>
            <person name="Konno H."/>
            <person name="Nakano K."/>
            <person name="Ninomiya N."/>
            <person name="Nishio T."/>
            <person name="Okada M."/>
            <person name="Plessy C."/>
            <person name="Shibata K."/>
            <person name="Shiraki T."/>
            <person name="Suzuki S."/>
            <person name="Tagami M."/>
            <person name="Waki K."/>
            <person name="Watahiki A."/>
            <person name="Okamura-Oho Y."/>
            <person name="Suzuki H."/>
            <person name="Kawai J."/>
            <person name="Hayashizaki Y."/>
        </authorList>
    </citation>
    <scope>NUCLEOTIDE SEQUENCE [LARGE SCALE MRNA]</scope>
    <source>
        <strain>C57BL/6J</strain>
        <tissue>Corpora quadrigemina</tissue>
        <tissue>Testis</tissue>
    </source>
</reference>
<reference key="2">
    <citation type="journal article" date="2009" name="PLoS Biol.">
        <title>Lineage-specific biology revealed by a finished genome assembly of the mouse.</title>
        <authorList>
            <person name="Church D.M."/>
            <person name="Goodstadt L."/>
            <person name="Hillier L.W."/>
            <person name="Zody M.C."/>
            <person name="Goldstein S."/>
            <person name="She X."/>
            <person name="Bult C.J."/>
            <person name="Agarwala R."/>
            <person name="Cherry J.L."/>
            <person name="DiCuccio M."/>
            <person name="Hlavina W."/>
            <person name="Kapustin Y."/>
            <person name="Meric P."/>
            <person name="Maglott D."/>
            <person name="Birtle Z."/>
            <person name="Marques A.C."/>
            <person name="Graves T."/>
            <person name="Zhou S."/>
            <person name="Teague B."/>
            <person name="Potamousis K."/>
            <person name="Churas C."/>
            <person name="Place M."/>
            <person name="Herschleb J."/>
            <person name="Runnheim R."/>
            <person name="Forrest D."/>
            <person name="Amos-Landgraf J."/>
            <person name="Schwartz D.C."/>
            <person name="Cheng Z."/>
            <person name="Lindblad-Toh K."/>
            <person name="Eichler E.E."/>
            <person name="Ponting C.P."/>
        </authorList>
    </citation>
    <scope>NUCLEOTIDE SEQUENCE [LARGE SCALE GENOMIC DNA]</scope>
    <source>
        <strain>C57BL/6J</strain>
    </source>
</reference>
<reference key="3">
    <citation type="journal article" date="2004" name="Genome Res.">
        <title>The status, quality, and expansion of the NIH full-length cDNA project: the Mammalian Gene Collection (MGC).</title>
        <authorList>
            <consortium name="The MGC Project Team"/>
        </authorList>
    </citation>
    <scope>NUCLEOTIDE SEQUENCE [LARGE SCALE MRNA]</scope>
    <source>
        <tissue>Eye</tissue>
    </source>
</reference>
<reference key="4">
    <citation type="journal article" date="2010" name="Cell">
        <title>A tissue-specific atlas of mouse protein phosphorylation and expression.</title>
        <authorList>
            <person name="Huttlin E.L."/>
            <person name="Jedrychowski M.P."/>
            <person name="Elias J.E."/>
            <person name="Goswami T."/>
            <person name="Rad R."/>
            <person name="Beausoleil S.A."/>
            <person name="Villen J."/>
            <person name="Haas W."/>
            <person name="Sowa M.E."/>
            <person name="Gygi S.P."/>
        </authorList>
    </citation>
    <scope>PHOSPHORYLATION [LARGE SCALE ANALYSIS] AT SER-75 AND SER-80</scope>
    <scope>IDENTIFICATION BY MASS SPECTROMETRY [LARGE SCALE ANALYSIS]</scope>
    <source>
        <tissue>Brain</tissue>
        <tissue>Heart</tissue>
        <tissue>Kidney</tissue>
        <tissue>Lung</tissue>
        <tissue>Testis</tissue>
    </source>
</reference>
<gene>
    <name type="primary">Hexim2</name>
</gene>
<sequence length="313" mass="35397">MATVNHTNCNTASPAALEEAKTSGGLRSPQIAHEPHDFGGSQLLPSGQEIQSEDEGTVPAGDGSSCNIRGSRTQSPGGCSVEAVLARKKHRRRPSKRKRHWRPYLELSWAEKQQRDERQSQRASRVREEMFAKGQPLAPYNTTQFLMNDRDLEEPNLDVLHGPSHSGSGGENEAGDSDGQGRAHGEFQQRDFSEAYERYHTESLQGRSKQELVRDYLDLERRLSQAEQETRRLRQLQGCSSRQPCQQVEELAAEVERLRTENQRLRQENEMWNREGGYCDQEKPASEGTPWPKVEAPFQTHTGQLGHREAGDR</sequence>
<name>HEXI2_MOUSE</name>
<keyword id="KW-0175">Coiled coil</keyword>
<keyword id="KW-0539">Nucleus</keyword>
<keyword id="KW-0597">Phosphoprotein</keyword>
<keyword id="KW-1185">Reference proteome</keyword>
<keyword id="KW-0678">Repressor</keyword>
<keyword id="KW-0804">Transcription</keyword>
<keyword id="KW-0805">Transcription regulation</keyword>
<proteinExistence type="evidence at protein level"/>
<dbReference type="EMBL" id="AK016624">
    <property type="protein sequence ID" value="BAB30344.1"/>
    <property type="status" value="ALT_FRAME"/>
    <property type="molecule type" value="mRNA"/>
</dbReference>
<dbReference type="EMBL" id="AK140145">
    <property type="protein sequence ID" value="BAE24255.1"/>
    <property type="molecule type" value="mRNA"/>
</dbReference>
<dbReference type="EMBL" id="AK160110">
    <property type="protein sequence ID" value="BAE35634.1"/>
    <property type="molecule type" value="mRNA"/>
</dbReference>
<dbReference type="EMBL" id="AL662804">
    <property type="status" value="NOT_ANNOTATED_CDS"/>
    <property type="molecule type" value="Genomic_DNA"/>
</dbReference>
<dbReference type="EMBL" id="AL731805">
    <property type="status" value="NOT_ANNOTATED_CDS"/>
    <property type="molecule type" value="Genomic_DNA"/>
</dbReference>
<dbReference type="EMBL" id="BC026458">
    <property type="protein sequence ID" value="AAH26458.1"/>
    <property type="molecule type" value="mRNA"/>
</dbReference>
<dbReference type="EMBL" id="BC115597">
    <property type="protein sequence ID" value="AAI15598.1"/>
    <property type="molecule type" value="mRNA"/>
</dbReference>
<dbReference type="EMBL" id="BC115598">
    <property type="protein sequence ID" value="AAI15599.1"/>
    <property type="molecule type" value="mRNA"/>
</dbReference>
<dbReference type="CCDS" id="CCDS25514.1"/>
<dbReference type="RefSeq" id="NP_001123987.1">
    <property type="nucleotide sequence ID" value="NM_001130515.1"/>
</dbReference>
<dbReference type="RefSeq" id="NP_001123988.1">
    <property type="nucleotide sequence ID" value="NM_001130516.1"/>
</dbReference>
<dbReference type="RefSeq" id="NP_081934.1">
    <property type="nucleotide sequence ID" value="NM_027658.2"/>
</dbReference>
<dbReference type="RefSeq" id="XP_006534291.1">
    <property type="nucleotide sequence ID" value="XM_006534228.3"/>
</dbReference>
<dbReference type="RefSeq" id="XP_006534292.1">
    <property type="nucleotide sequence ID" value="XM_006534229.3"/>
</dbReference>
<dbReference type="RefSeq" id="XP_006534293.1">
    <property type="nucleotide sequence ID" value="XM_006534230.4"/>
</dbReference>
<dbReference type="RefSeq" id="XP_006534294.1">
    <property type="nucleotide sequence ID" value="XM_006534231.4"/>
</dbReference>
<dbReference type="RefSeq" id="XP_030102180.1">
    <property type="nucleotide sequence ID" value="XM_030246320.1"/>
</dbReference>
<dbReference type="SMR" id="Q3TVI4"/>
<dbReference type="FunCoup" id="Q3TVI4">
    <property type="interactions" value="703"/>
</dbReference>
<dbReference type="IntAct" id="Q3TVI4">
    <property type="interactions" value="1"/>
</dbReference>
<dbReference type="STRING" id="10090.ENSMUSP00000053678"/>
<dbReference type="GlyGen" id="Q3TVI4">
    <property type="glycosylation" value="1 site, 1 N-linked glycan (1 site)"/>
</dbReference>
<dbReference type="iPTMnet" id="Q3TVI4"/>
<dbReference type="PhosphoSitePlus" id="Q3TVI4"/>
<dbReference type="jPOST" id="Q3TVI4"/>
<dbReference type="PaxDb" id="10090-ENSMUSP00000053678"/>
<dbReference type="PeptideAtlas" id="Q3TVI4"/>
<dbReference type="ProteomicsDB" id="273336"/>
<dbReference type="Antibodypedia" id="17593">
    <property type="antibodies" value="163 antibodies from 29 providers"/>
</dbReference>
<dbReference type="Ensembl" id="ENSMUST00000062530.5">
    <property type="protein sequence ID" value="ENSMUSP00000053678.5"/>
    <property type="gene ID" value="ENSMUSG00000043372.13"/>
</dbReference>
<dbReference type="Ensembl" id="ENSMUST00000107037.8">
    <property type="protein sequence ID" value="ENSMUSP00000102652.2"/>
    <property type="gene ID" value="ENSMUSG00000043372.13"/>
</dbReference>
<dbReference type="GeneID" id="71059"/>
<dbReference type="KEGG" id="mmu:71059"/>
<dbReference type="UCSC" id="uc007ltp.2">
    <property type="organism name" value="mouse"/>
</dbReference>
<dbReference type="AGR" id="MGI:1918309"/>
<dbReference type="CTD" id="124790"/>
<dbReference type="MGI" id="MGI:1918309">
    <property type="gene designation" value="Hexim2"/>
</dbReference>
<dbReference type="VEuPathDB" id="HostDB:ENSMUSG00000043372"/>
<dbReference type="eggNOG" id="ENOG502QQP8">
    <property type="taxonomic scope" value="Eukaryota"/>
</dbReference>
<dbReference type="GeneTree" id="ENSGT00390000002808"/>
<dbReference type="HOGENOM" id="CLU_066028_1_0_1"/>
<dbReference type="InParanoid" id="Q3TVI4"/>
<dbReference type="OMA" id="MWNREGS"/>
<dbReference type="OrthoDB" id="10058500at2759"/>
<dbReference type="PhylomeDB" id="Q3TVI4"/>
<dbReference type="TreeFam" id="TF336851"/>
<dbReference type="BioGRID-ORCS" id="71059">
    <property type="hits" value="0 hits in 80 CRISPR screens"/>
</dbReference>
<dbReference type="PRO" id="PR:Q3TVI4"/>
<dbReference type="Proteomes" id="UP000000589">
    <property type="component" value="Chromosome 11"/>
</dbReference>
<dbReference type="RNAct" id="Q3TVI4">
    <property type="molecule type" value="protein"/>
</dbReference>
<dbReference type="Bgee" id="ENSMUSG00000043372">
    <property type="expression patterns" value="Expressed in primary oocyte and 150 other cell types or tissues"/>
</dbReference>
<dbReference type="ExpressionAtlas" id="Q3TVI4">
    <property type="expression patterns" value="baseline and differential"/>
</dbReference>
<dbReference type="GO" id="GO:0005829">
    <property type="term" value="C:cytosol"/>
    <property type="evidence" value="ECO:0007669"/>
    <property type="project" value="Ensembl"/>
</dbReference>
<dbReference type="GO" id="GO:0016607">
    <property type="term" value="C:nuclear speck"/>
    <property type="evidence" value="ECO:0007669"/>
    <property type="project" value="Ensembl"/>
</dbReference>
<dbReference type="GO" id="GO:0097322">
    <property type="term" value="F:7SK snRNA binding"/>
    <property type="evidence" value="ECO:0000250"/>
    <property type="project" value="UniProtKB"/>
</dbReference>
<dbReference type="GO" id="GO:0004861">
    <property type="term" value="F:cyclin-dependent protein serine/threonine kinase inhibitor activity"/>
    <property type="evidence" value="ECO:0007669"/>
    <property type="project" value="Ensembl"/>
</dbReference>
<dbReference type="GO" id="GO:0042802">
    <property type="term" value="F:identical protein binding"/>
    <property type="evidence" value="ECO:0007669"/>
    <property type="project" value="Ensembl"/>
</dbReference>
<dbReference type="GO" id="GO:0010972">
    <property type="term" value="P:negative regulation of G2/M transition of mitotic cell cycle"/>
    <property type="evidence" value="ECO:0007669"/>
    <property type="project" value="Ensembl"/>
</dbReference>
<dbReference type="GO" id="GO:0000122">
    <property type="term" value="P:negative regulation of transcription by RNA polymerase II"/>
    <property type="evidence" value="ECO:0007669"/>
    <property type="project" value="Ensembl"/>
</dbReference>
<dbReference type="Gene3D" id="6.10.250.2910">
    <property type="match status" value="1"/>
</dbReference>
<dbReference type="InterPro" id="IPR024872">
    <property type="entry name" value="HEXIM"/>
</dbReference>
<dbReference type="PANTHER" id="PTHR13469">
    <property type="entry name" value="HEXAMETHYLENE BISACETAMIDE INDUCIBLE 1"/>
    <property type="match status" value="1"/>
</dbReference>
<dbReference type="PANTHER" id="PTHR13469:SF3">
    <property type="entry name" value="PROTEIN HEXIM2"/>
    <property type="match status" value="1"/>
</dbReference>
<dbReference type="Pfam" id="PF15313">
    <property type="entry name" value="HEXIM"/>
    <property type="match status" value="1"/>
</dbReference>
<dbReference type="PRINTS" id="PR02094">
    <property type="entry name" value="HEXIMFAMILY"/>
</dbReference>
<protein>
    <recommendedName>
        <fullName>Protein HEXIM2</fullName>
    </recommendedName>
</protein>
<comment type="function">
    <text evidence="2">Transcriptional regulator which functions as a general RNA polymerase II transcription inhibitor. Core component of the 7SK RNP complex: in cooperation with 7SK snRNA sequesters P-TEFb in a large inactive 7SK snRNP complex preventing RNA polymerase II phosphorylation and subsequent transcriptional elongation.</text>
</comment>
<comment type="subunit">
    <text evidence="2">Homooligomer and heterooligomer with HEXIM1; probably dimeric. Core component of the 7SK RNP complex, at least composed of 7SK RNA, LARP7, MEPCE, HEXIM1 (or HEXIM2) and P-TEFb (composed of CDK9 and CCNT1/cyclin-T1). Interacts with CCNT2.</text>
</comment>
<comment type="subcellular location">
    <subcellularLocation>
        <location evidence="2">Nucleus</location>
    </subcellularLocation>
</comment>
<comment type="domain">
    <text evidence="1">The coiled-coil domain mediates oligomerization.</text>
</comment>
<comment type="similarity">
    <text evidence="5">Belongs to the HEXIM family.</text>
</comment>
<comment type="sequence caution" evidence="5">
    <conflict type="frameshift">
        <sequence resource="EMBL-CDS" id="BAB30344"/>
    </conflict>
</comment>
<evidence type="ECO:0000250" key="1"/>
<evidence type="ECO:0000250" key="2">
    <source>
        <dbReference type="UniProtKB" id="Q96MH2"/>
    </source>
</evidence>
<evidence type="ECO:0000255" key="3"/>
<evidence type="ECO:0000256" key="4">
    <source>
        <dbReference type="SAM" id="MobiDB-lite"/>
    </source>
</evidence>
<evidence type="ECO:0000305" key="5"/>
<evidence type="ECO:0007744" key="6">
    <source>
    </source>
</evidence>
<accession>Q3TVI4</accession>
<accession>Q9D4C7</accession>
<feature type="chain" id="PRO_0000305268" description="Protein HEXIM2">
    <location>
        <begin position="1"/>
        <end position="313"/>
    </location>
</feature>
<feature type="region of interest" description="Disordered" evidence="4">
    <location>
        <begin position="1"/>
        <end position="78"/>
    </location>
</feature>
<feature type="region of interest" description="Disordered" evidence="4">
    <location>
        <begin position="111"/>
        <end position="139"/>
    </location>
</feature>
<feature type="region of interest" description="Interaction with P-TEFb" evidence="1">
    <location>
        <begin position="139"/>
        <end position="142"/>
    </location>
</feature>
<feature type="region of interest" description="Disordered" evidence="4">
    <location>
        <begin position="155"/>
        <end position="194"/>
    </location>
</feature>
<feature type="region of interest" description="Interaction with CCNT1, HEXIM1 and HEXIM2" evidence="1">
    <location>
        <begin position="225"/>
        <end position="286"/>
    </location>
</feature>
<feature type="region of interest" description="Disordered" evidence="4">
    <location>
        <begin position="267"/>
        <end position="313"/>
    </location>
</feature>
<feature type="coiled-coil region" evidence="3">
    <location>
        <begin position="207"/>
        <end position="276"/>
    </location>
</feature>
<feature type="compositionally biased region" description="Polar residues" evidence="4">
    <location>
        <begin position="1"/>
        <end position="13"/>
    </location>
</feature>
<feature type="compositionally biased region" description="Polar residues" evidence="4">
    <location>
        <begin position="64"/>
        <end position="77"/>
    </location>
</feature>
<feature type="compositionally biased region" description="Basic and acidic residues" evidence="4">
    <location>
        <begin position="112"/>
        <end position="131"/>
    </location>
</feature>
<feature type="compositionally biased region" description="Basic and acidic residues" evidence="4">
    <location>
        <begin position="179"/>
        <end position="194"/>
    </location>
</feature>
<feature type="modified residue" description="Phosphoserine" evidence="2">
    <location>
        <position position="28"/>
    </location>
</feature>
<feature type="modified residue" description="Phosphoserine" evidence="2">
    <location>
        <position position="52"/>
    </location>
</feature>
<feature type="modified residue" description="Phosphoserine" evidence="6">
    <location>
        <position position="75"/>
    </location>
</feature>
<feature type="modified residue" description="Phosphoserine" evidence="6">
    <location>
        <position position="80"/>
    </location>
</feature>
<organism>
    <name type="scientific">Mus musculus</name>
    <name type="common">Mouse</name>
    <dbReference type="NCBI Taxonomy" id="10090"/>
    <lineage>
        <taxon>Eukaryota</taxon>
        <taxon>Metazoa</taxon>
        <taxon>Chordata</taxon>
        <taxon>Craniata</taxon>
        <taxon>Vertebrata</taxon>
        <taxon>Euteleostomi</taxon>
        <taxon>Mammalia</taxon>
        <taxon>Eutheria</taxon>
        <taxon>Euarchontoglires</taxon>
        <taxon>Glires</taxon>
        <taxon>Rodentia</taxon>
        <taxon>Myomorpha</taxon>
        <taxon>Muroidea</taxon>
        <taxon>Muridae</taxon>
        <taxon>Murinae</taxon>
        <taxon>Mus</taxon>
        <taxon>Mus</taxon>
    </lineage>
</organism>